<reference key="1">
    <citation type="journal article" date="2005" name="J. Bacteriol.">
        <title>Complete genome sequence and analysis of the multiresistant nosocomial pathogen Corynebacterium jeikeium K411, a lipid-requiring bacterium of the human skin flora.</title>
        <authorList>
            <person name="Tauch A."/>
            <person name="Kaiser O."/>
            <person name="Hain T."/>
            <person name="Goesmann A."/>
            <person name="Weisshaar B."/>
            <person name="Albersmeier A."/>
            <person name="Bekel T."/>
            <person name="Bischoff N."/>
            <person name="Brune I."/>
            <person name="Chakraborty T."/>
            <person name="Kalinowski J."/>
            <person name="Meyer F."/>
            <person name="Rupp O."/>
            <person name="Schneiker S."/>
            <person name="Viehoever P."/>
            <person name="Puehler A."/>
        </authorList>
    </citation>
    <scope>NUCLEOTIDE SEQUENCE [LARGE SCALE GENOMIC DNA]</scope>
    <source>
        <strain>K411</strain>
    </source>
</reference>
<feature type="chain" id="PRO_0000083798" description="3-isopropylmalate dehydrogenase">
    <location>
        <begin position="1"/>
        <end position="338"/>
    </location>
</feature>
<feature type="binding site" evidence="1">
    <location>
        <position position="88"/>
    </location>
    <ligand>
        <name>substrate</name>
    </ligand>
</feature>
<feature type="binding site" evidence="1">
    <location>
        <position position="98"/>
    </location>
    <ligand>
        <name>substrate</name>
    </ligand>
</feature>
<feature type="binding site" evidence="1">
    <location>
        <position position="122"/>
    </location>
    <ligand>
        <name>substrate</name>
    </ligand>
</feature>
<feature type="binding site" evidence="1">
    <location>
        <position position="212"/>
    </location>
    <ligand>
        <name>Mg(2+)</name>
        <dbReference type="ChEBI" id="CHEBI:18420"/>
    </ligand>
</feature>
<feature type="binding site" evidence="1">
    <location>
        <position position="212"/>
    </location>
    <ligand>
        <name>substrate</name>
    </ligand>
</feature>
<feature type="binding site" evidence="1">
    <location>
        <position position="236"/>
    </location>
    <ligand>
        <name>Mg(2+)</name>
        <dbReference type="ChEBI" id="CHEBI:18420"/>
    </ligand>
</feature>
<feature type="binding site" evidence="1">
    <location>
        <position position="240"/>
    </location>
    <ligand>
        <name>Mg(2+)</name>
        <dbReference type="ChEBI" id="CHEBI:18420"/>
    </ligand>
</feature>
<feature type="binding site" evidence="1">
    <location>
        <begin position="272"/>
        <end position="284"/>
    </location>
    <ligand>
        <name>NAD(+)</name>
        <dbReference type="ChEBI" id="CHEBI:57540"/>
    </ligand>
</feature>
<feature type="site" description="Important for catalysis" evidence="1">
    <location>
        <position position="129"/>
    </location>
</feature>
<feature type="site" description="Important for catalysis" evidence="1">
    <location>
        <position position="179"/>
    </location>
</feature>
<keyword id="KW-0028">Amino-acid biosynthesis</keyword>
<keyword id="KW-0100">Branched-chain amino acid biosynthesis</keyword>
<keyword id="KW-0963">Cytoplasm</keyword>
<keyword id="KW-0432">Leucine biosynthesis</keyword>
<keyword id="KW-0460">Magnesium</keyword>
<keyword id="KW-0464">Manganese</keyword>
<keyword id="KW-0479">Metal-binding</keyword>
<keyword id="KW-0520">NAD</keyword>
<keyword id="KW-0560">Oxidoreductase</keyword>
<keyword id="KW-1185">Reference proteome</keyword>
<accession>Q4JUQ0</accession>
<dbReference type="EC" id="1.1.1.85" evidence="1"/>
<dbReference type="EMBL" id="CR931997">
    <property type="protein sequence ID" value="CAI37457.1"/>
    <property type="molecule type" value="Genomic_DNA"/>
</dbReference>
<dbReference type="RefSeq" id="WP_011273783.1">
    <property type="nucleotide sequence ID" value="NC_007164.1"/>
</dbReference>
<dbReference type="SMR" id="Q4JUQ0"/>
<dbReference type="STRING" id="306537.jk1288"/>
<dbReference type="KEGG" id="cjk:jk1288"/>
<dbReference type="PATRIC" id="fig|306537.10.peg.1305"/>
<dbReference type="eggNOG" id="COG0473">
    <property type="taxonomic scope" value="Bacteria"/>
</dbReference>
<dbReference type="HOGENOM" id="CLU_031953_0_1_11"/>
<dbReference type="OrthoDB" id="5289857at2"/>
<dbReference type="UniPathway" id="UPA00048">
    <property type="reaction ID" value="UER00072"/>
</dbReference>
<dbReference type="Proteomes" id="UP000000545">
    <property type="component" value="Chromosome"/>
</dbReference>
<dbReference type="GO" id="GO:0005737">
    <property type="term" value="C:cytoplasm"/>
    <property type="evidence" value="ECO:0007669"/>
    <property type="project" value="UniProtKB-SubCell"/>
</dbReference>
<dbReference type="GO" id="GO:0003862">
    <property type="term" value="F:3-isopropylmalate dehydrogenase activity"/>
    <property type="evidence" value="ECO:0007669"/>
    <property type="project" value="UniProtKB-UniRule"/>
</dbReference>
<dbReference type="GO" id="GO:0000287">
    <property type="term" value="F:magnesium ion binding"/>
    <property type="evidence" value="ECO:0007669"/>
    <property type="project" value="InterPro"/>
</dbReference>
<dbReference type="GO" id="GO:0051287">
    <property type="term" value="F:NAD binding"/>
    <property type="evidence" value="ECO:0007669"/>
    <property type="project" value="InterPro"/>
</dbReference>
<dbReference type="GO" id="GO:0009098">
    <property type="term" value="P:L-leucine biosynthetic process"/>
    <property type="evidence" value="ECO:0007669"/>
    <property type="project" value="UniProtKB-UniRule"/>
</dbReference>
<dbReference type="Gene3D" id="3.40.718.10">
    <property type="entry name" value="Isopropylmalate Dehydrogenase"/>
    <property type="match status" value="1"/>
</dbReference>
<dbReference type="HAMAP" id="MF_01035">
    <property type="entry name" value="LeuB_type2"/>
    <property type="match status" value="1"/>
</dbReference>
<dbReference type="InterPro" id="IPR050501">
    <property type="entry name" value="ICDH/IPMDH"/>
</dbReference>
<dbReference type="InterPro" id="IPR019818">
    <property type="entry name" value="IsoCit/isopropylmalate_DH_CS"/>
</dbReference>
<dbReference type="InterPro" id="IPR024084">
    <property type="entry name" value="IsoPropMal-DH-like_dom"/>
</dbReference>
<dbReference type="InterPro" id="IPR023698">
    <property type="entry name" value="LeuB_actb"/>
</dbReference>
<dbReference type="NCBIfam" id="NF002898">
    <property type="entry name" value="PRK03437.1"/>
    <property type="match status" value="1"/>
</dbReference>
<dbReference type="PANTHER" id="PTHR43275">
    <property type="entry name" value="D-MALATE DEHYDROGENASE [DECARBOXYLATING]"/>
    <property type="match status" value="1"/>
</dbReference>
<dbReference type="PANTHER" id="PTHR43275:SF1">
    <property type="entry name" value="D-MALATE DEHYDROGENASE [DECARBOXYLATING]"/>
    <property type="match status" value="1"/>
</dbReference>
<dbReference type="Pfam" id="PF00180">
    <property type="entry name" value="Iso_dh"/>
    <property type="match status" value="1"/>
</dbReference>
<dbReference type="SMART" id="SM01329">
    <property type="entry name" value="Iso_dh"/>
    <property type="match status" value="1"/>
</dbReference>
<dbReference type="SUPFAM" id="SSF53659">
    <property type="entry name" value="Isocitrate/Isopropylmalate dehydrogenase-like"/>
    <property type="match status" value="1"/>
</dbReference>
<dbReference type="PROSITE" id="PS00470">
    <property type="entry name" value="IDH_IMDH"/>
    <property type="match status" value="1"/>
</dbReference>
<organism>
    <name type="scientific">Corynebacterium jeikeium (strain K411)</name>
    <dbReference type="NCBI Taxonomy" id="306537"/>
    <lineage>
        <taxon>Bacteria</taxon>
        <taxon>Bacillati</taxon>
        <taxon>Actinomycetota</taxon>
        <taxon>Actinomycetes</taxon>
        <taxon>Mycobacteriales</taxon>
        <taxon>Corynebacteriaceae</taxon>
        <taxon>Corynebacterium</taxon>
    </lineage>
</organism>
<evidence type="ECO:0000255" key="1">
    <source>
        <dbReference type="HAMAP-Rule" id="MF_01035"/>
    </source>
</evidence>
<protein>
    <recommendedName>
        <fullName evidence="1">3-isopropylmalate dehydrogenase</fullName>
        <ecNumber evidence="1">1.1.1.85</ecNumber>
    </recommendedName>
    <alternativeName>
        <fullName evidence="1">3-IPM-DH</fullName>
    </alternativeName>
    <alternativeName>
        <fullName evidence="1">Beta-IPM dehydrogenase</fullName>
        <shortName evidence="1">IMDH</shortName>
    </alternativeName>
</protein>
<sequence>MKLAVIAGDGIGTEVTAEALKVLHALRDDVETTDYDLGARRYLRNGELLTDEDLDSLREHDAILLGAIGDPRTVPAGVLERGLLLPLRFKLDHAVNLRPSKLYPGSSSPLANPGDIDFVVVREGTEGLYCGNGGTLRAGTDYEVASEVSQNTYYGVERVVRDAFERAQSRRKKLTWVHKTNVLVNAGSLWQRAIETVGQEYPEVQVDYNHIDAATIYMVTKPQEYDVIVTDNLFGDILTDLAGAVTGGIGLAASGNIDPSRKNPSMFEPVHGSAPDIAGQGIADPCAAILSVALMLRHLGDDANAERIEAAVLAEAGSRDGGPVKTAEVGDRVVANLK</sequence>
<proteinExistence type="inferred from homology"/>
<name>LEU3_CORJK</name>
<gene>
    <name evidence="1" type="primary">leuB</name>
    <name type="ordered locus">jk1288</name>
</gene>
<comment type="function">
    <text evidence="1">Catalyzes the oxidation of 3-carboxy-2-hydroxy-4-methylpentanoate (3-isopropylmalate) to 3-carboxy-4-methyl-2-oxopentanoate. The product decarboxylates to 4-methyl-2 oxopentanoate.</text>
</comment>
<comment type="catalytic activity">
    <reaction evidence="1">
        <text>(2R,3S)-3-isopropylmalate + NAD(+) = 4-methyl-2-oxopentanoate + CO2 + NADH</text>
        <dbReference type="Rhea" id="RHEA:32271"/>
        <dbReference type="ChEBI" id="CHEBI:16526"/>
        <dbReference type="ChEBI" id="CHEBI:17865"/>
        <dbReference type="ChEBI" id="CHEBI:35121"/>
        <dbReference type="ChEBI" id="CHEBI:57540"/>
        <dbReference type="ChEBI" id="CHEBI:57945"/>
        <dbReference type="EC" id="1.1.1.85"/>
    </reaction>
</comment>
<comment type="cofactor">
    <cofactor evidence="1">
        <name>Mg(2+)</name>
        <dbReference type="ChEBI" id="CHEBI:18420"/>
    </cofactor>
    <cofactor evidence="1">
        <name>Mn(2+)</name>
        <dbReference type="ChEBI" id="CHEBI:29035"/>
    </cofactor>
    <text evidence="1">Binds 1 Mg(2+) or Mn(2+) ion per subunit.</text>
</comment>
<comment type="pathway">
    <text evidence="1">Amino-acid biosynthesis; L-leucine biosynthesis; L-leucine from 3-methyl-2-oxobutanoate: step 3/4.</text>
</comment>
<comment type="subunit">
    <text evidence="1">Homodimer.</text>
</comment>
<comment type="subcellular location">
    <subcellularLocation>
        <location evidence="1">Cytoplasm</location>
    </subcellularLocation>
</comment>
<comment type="similarity">
    <text evidence="1">Belongs to the isocitrate and isopropylmalate dehydrogenases family. LeuB type 2 subfamily.</text>
</comment>